<keyword id="KW-0143">Chaperone</keyword>
<keyword id="KW-0963">Cytoplasm</keyword>
<keyword id="KW-1185">Reference proteome</keyword>
<evidence type="ECO:0000255" key="1">
    <source>
        <dbReference type="HAMAP-Rule" id="MF_00580"/>
    </source>
</evidence>
<gene>
    <name evidence="1" type="primary">groES</name>
    <name evidence="1" type="synonym">groS</name>
    <name type="ordered locus">Mlg_0020</name>
</gene>
<accession>Q0ACQ8</accession>
<protein>
    <recommendedName>
        <fullName evidence="1">Co-chaperonin GroES</fullName>
    </recommendedName>
    <alternativeName>
        <fullName evidence="1">10 kDa chaperonin</fullName>
    </alternativeName>
    <alternativeName>
        <fullName evidence="1">Chaperonin-10</fullName>
        <shortName evidence="1">Cpn10</shortName>
    </alternativeName>
</protein>
<dbReference type="EMBL" id="CP000453">
    <property type="protein sequence ID" value="ABI55379.1"/>
    <property type="molecule type" value="Genomic_DNA"/>
</dbReference>
<dbReference type="RefSeq" id="WP_011627775.1">
    <property type="nucleotide sequence ID" value="NC_008340.1"/>
</dbReference>
<dbReference type="SMR" id="Q0ACQ8"/>
<dbReference type="KEGG" id="aeh:Mlg_0020"/>
<dbReference type="eggNOG" id="COG0234">
    <property type="taxonomic scope" value="Bacteria"/>
</dbReference>
<dbReference type="HOGENOM" id="CLU_132825_2_0_6"/>
<dbReference type="OrthoDB" id="9806791at2"/>
<dbReference type="Proteomes" id="UP000001962">
    <property type="component" value="Chromosome"/>
</dbReference>
<dbReference type="GO" id="GO:0005737">
    <property type="term" value="C:cytoplasm"/>
    <property type="evidence" value="ECO:0007669"/>
    <property type="project" value="UniProtKB-SubCell"/>
</dbReference>
<dbReference type="GO" id="GO:0005524">
    <property type="term" value="F:ATP binding"/>
    <property type="evidence" value="ECO:0007669"/>
    <property type="project" value="InterPro"/>
</dbReference>
<dbReference type="GO" id="GO:0046872">
    <property type="term" value="F:metal ion binding"/>
    <property type="evidence" value="ECO:0007669"/>
    <property type="project" value="TreeGrafter"/>
</dbReference>
<dbReference type="GO" id="GO:0044183">
    <property type="term" value="F:protein folding chaperone"/>
    <property type="evidence" value="ECO:0007669"/>
    <property type="project" value="InterPro"/>
</dbReference>
<dbReference type="GO" id="GO:0051087">
    <property type="term" value="F:protein-folding chaperone binding"/>
    <property type="evidence" value="ECO:0007669"/>
    <property type="project" value="TreeGrafter"/>
</dbReference>
<dbReference type="GO" id="GO:0051082">
    <property type="term" value="F:unfolded protein binding"/>
    <property type="evidence" value="ECO:0007669"/>
    <property type="project" value="TreeGrafter"/>
</dbReference>
<dbReference type="GO" id="GO:0051085">
    <property type="term" value="P:chaperone cofactor-dependent protein refolding"/>
    <property type="evidence" value="ECO:0007669"/>
    <property type="project" value="TreeGrafter"/>
</dbReference>
<dbReference type="CDD" id="cd00320">
    <property type="entry name" value="cpn10"/>
    <property type="match status" value="1"/>
</dbReference>
<dbReference type="FunFam" id="2.30.33.40:FF:000001">
    <property type="entry name" value="10 kDa chaperonin"/>
    <property type="match status" value="1"/>
</dbReference>
<dbReference type="Gene3D" id="2.30.33.40">
    <property type="entry name" value="GroES chaperonin"/>
    <property type="match status" value="1"/>
</dbReference>
<dbReference type="HAMAP" id="MF_00580">
    <property type="entry name" value="CH10"/>
    <property type="match status" value="1"/>
</dbReference>
<dbReference type="InterPro" id="IPR020818">
    <property type="entry name" value="Chaperonin_GroES"/>
</dbReference>
<dbReference type="InterPro" id="IPR037124">
    <property type="entry name" value="Chaperonin_GroES_sf"/>
</dbReference>
<dbReference type="InterPro" id="IPR018369">
    <property type="entry name" value="Chaprnonin_Cpn10_CS"/>
</dbReference>
<dbReference type="InterPro" id="IPR011032">
    <property type="entry name" value="GroES-like_sf"/>
</dbReference>
<dbReference type="NCBIfam" id="NF001527">
    <property type="entry name" value="PRK00364.1-2"/>
    <property type="match status" value="1"/>
</dbReference>
<dbReference type="NCBIfam" id="NF001529">
    <property type="entry name" value="PRK00364.1-5"/>
    <property type="match status" value="1"/>
</dbReference>
<dbReference type="NCBIfam" id="NF001531">
    <property type="entry name" value="PRK00364.2-2"/>
    <property type="match status" value="1"/>
</dbReference>
<dbReference type="NCBIfam" id="NF001533">
    <property type="entry name" value="PRK00364.2-4"/>
    <property type="match status" value="1"/>
</dbReference>
<dbReference type="NCBIfam" id="NF001534">
    <property type="entry name" value="PRK00364.2-5"/>
    <property type="match status" value="1"/>
</dbReference>
<dbReference type="PANTHER" id="PTHR10772">
    <property type="entry name" value="10 KDA HEAT SHOCK PROTEIN"/>
    <property type="match status" value="1"/>
</dbReference>
<dbReference type="PANTHER" id="PTHR10772:SF58">
    <property type="entry name" value="CO-CHAPERONIN GROES"/>
    <property type="match status" value="1"/>
</dbReference>
<dbReference type="Pfam" id="PF00166">
    <property type="entry name" value="Cpn10"/>
    <property type="match status" value="1"/>
</dbReference>
<dbReference type="PRINTS" id="PR00297">
    <property type="entry name" value="CHAPERONIN10"/>
</dbReference>
<dbReference type="SMART" id="SM00883">
    <property type="entry name" value="Cpn10"/>
    <property type="match status" value="1"/>
</dbReference>
<dbReference type="SUPFAM" id="SSF50129">
    <property type="entry name" value="GroES-like"/>
    <property type="match status" value="1"/>
</dbReference>
<dbReference type="PROSITE" id="PS00681">
    <property type="entry name" value="CHAPERONINS_CPN10"/>
    <property type="match status" value="1"/>
</dbReference>
<name>CH10_ALKEH</name>
<sequence length="95" mass="10382">MNIRPLHDRVVIKRMEEERTSPGGIVIPDSAAEKPIKGEVVAVGNGKLLDNGETRPLDLKVGDKVLFGKFAGTEVKVDGEELLVMREDDVMAIVE</sequence>
<proteinExistence type="inferred from homology"/>
<organism>
    <name type="scientific">Alkalilimnicola ehrlichii (strain ATCC BAA-1101 / DSM 17681 / MLHE-1)</name>
    <dbReference type="NCBI Taxonomy" id="187272"/>
    <lineage>
        <taxon>Bacteria</taxon>
        <taxon>Pseudomonadati</taxon>
        <taxon>Pseudomonadota</taxon>
        <taxon>Gammaproteobacteria</taxon>
        <taxon>Chromatiales</taxon>
        <taxon>Ectothiorhodospiraceae</taxon>
        <taxon>Alkalilimnicola</taxon>
    </lineage>
</organism>
<reference key="1">
    <citation type="submission" date="2006-08" db="EMBL/GenBank/DDBJ databases">
        <title>Complete sequence of Alkalilimnicola ehrilichei MLHE-1.</title>
        <authorList>
            <person name="Copeland A."/>
            <person name="Lucas S."/>
            <person name="Lapidus A."/>
            <person name="Barry K."/>
            <person name="Detter J.C."/>
            <person name="Glavina del Rio T."/>
            <person name="Hammon N."/>
            <person name="Israni S."/>
            <person name="Dalin E."/>
            <person name="Tice H."/>
            <person name="Pitluck S."/>
            <person name="Sims D."/>
            <person name="Brettin T."/>
            <person name="Bruce D."/>
            <person name="Han C."/>
            <person name="Tapia R."/>
            <person name="Gilna P."/>
            <person name="Schmutz J."/>
            <person name="Larimer F."/>
            <person name="Land M."/>
            <person name="Hauser L."/>
            <person name="Kyrpides N."/>
            <person name="Mikhailova N."/>
            <person name="Oremland R.S."/>
            <person name="Hoeft S.E."/>
            <person name="Switzer-Blum J."/>
            <person name="Kulp T."/>
            <person name="King G."/>
            <person name="Tabita R."/>
            <person name="Witte B."/>
            <person name="Santini J.M."/>
            <person name="Basu P."/>
            <person name="Hollibaugh J.T."/>
            <person name="Xie G."/>
            <person name="Stolz J.F."/>
            <person name="Richardson P."/>
        </authorList>
    </citation>
    <scope>NUCLEOTIDE SEQUENCE [LARGE SCALE GENOMIC DNA]</scope>
    <source>
        <strain>ATCC BAA-1101 / DSM 17681 / MLHE-1</strain>
    </source>
</reference>
<comment type="function">
    <text evidence="1">Together with the chaperonin GroEL, plays an essential role in assisting protein folding. The GroEL-GroES system forms a nano-cage that allows encapsulation of the non-native substrate proteins and provides a physical environment optimized to promote and accelerate protein folding. GroES binds to the apical surface of the GroEL ring, thereby capping the opening of the GroEL channel.</text>
</comment>
<comment type="subunit">
    <text evidence="1">Heptamer of 7 subunits arranged in a ring. Interacts with the chaperonin GroEL.</text>
</comment>
<comment type="subcellular location">
    <subcellularLocation>
        <location evidence="1">Cytoplasm</location>
    </subcellularLocation>
</comment>
<comment type="similarity">
    <text evidence="1">Belongs to the GroES chaperonin family.</text>
</comment>
<feature type="chain" id="PRO_1000025203" description="Co-chaperonin GroES">
    <location>
        <begin position="1"/>
        <end position="95"/>
    </location>
</feature>